<accession>Q9PK28</accession>
<proteinExistence type="inferred from homology"/>
<name>AROA_CHLMU</name>
<organism>
    <name type="scientific">Chlamydia muridarum (strain MoPn / Nigg)</name>
    <dbReference type="NCBI Taxonomy" id="243161"/>
    <lineage>
        <taxon>Bacteria</taxon>
        <taxon>Pseudomonadati</taxon>
        <taxon>Chlamydiota</taxon>
        <taxon>Chlamydiia</taxon>
        <taxon>Chlamydiales</taxon>
        <taxon>Chlamydiaceae</taxon>
        <taxon>Chlamydia/Chlamydophila group</taxon>
        <taxon>Chlamydia</taxon>
    </lineage>
</organism>
<protein>
    <recommendedName>
        <fullName evidence="1">3-phosphoshikimate 1-carboxyvinyltransferase</fullName>
        <ecNumber evidence="1">2.5.1.19</ecNumber>
    </recommendedName>
    <alternativeName>
        <fullName evidence="1">5-enolpyruvylshikimate-3-phosphate synthase</fullName>
        <shortName evidence="1">EPSP synthase</shortName>
        <shortName evidence="1">EPSPS</shortName>
    </alternativeName>
</protein>
<feature type="chain" id="PRO_0000088243" description="3-phosphoshikimate 1-carboxyvinyltransferase">
    <location>
        <begin position="1"/>
        <end position="441"/>
    </location>
</feature>
<feature type="active site" description="Proton acceptor" evidence="1">
    <location>
        <position position="311"/>
    </location>
</feature>
<feature type="binding site" evidence="1">
    <location>
        <position position="25"/>
    </location>
    <ligand>
        <name>3-phosphoshikimate</name>
        <dbReference type="ChEBI" id="CHEBI:145989"/>
    </ligand>
</feature>
<feature type="binding site" evidence="1">
    <location>
        <position position="25"/>
    </location>
    <ligand>
        <name>phosphoenolpyruvate</name>
        <dbReference type="ChEBI" id="CHEBI:58702"/>
    </ligand>
</feature>
<feature type="binding site" evidence="1">
    <location>
        <position position="26"/>
    </location>
    <ligand>
        <name>3-phosphoshikimate</name>
        <dbReference type="ChEBI" id="CHEBI:145989"/>
    </ligand>
</feature>
<feature type="binding site" evidence="1">
    <location>
        <position position="30"/>
    </location>
    <ligand>
        <name>3-phosphoshikimate</name>
        <dbReference type="ChEBI" id="CHEBI:145989"/>
    </ligand>
</feature>
<feature type="binding site" evidence="1">
    <location>
        <position position="97"/>
    </location>
    <ligand>
        <name>phosphoenolpyruvate</name>
        <dbReference type="ChEBI" id="CHEBI:58702"/>
    </ligand>
</feature>
<feature type="binding site" evidence="1">
    <location>
        <position position="125"/>
    </location>
    <ligand>
        <name>phosphoenolpyruvate</name>
        <dbReference type="ChEBI" id="CHEBI:58702"/>
    </ligand>
</feature>
<feature type="binding site" evidence="1">
    <location>
        <position position="169"/>
    </location>
    <ligand>
        <name>3-phosphoshikimate</name>
        <dbReference type="ChEBI" id="CHEBI:145989"/>
    </ligand>
</feature>
<feature type="binding site" evidence="1">
    <location>
        <position position="170"/>
    </location>
    <ligand>
        <name>3-phosphoshikimate</name>
        <dbReference type="ChEBI" id="CHEBI:145989"/>
    </ligand>
</feature>
<feature type="binding site" evidence="1">
    <location>
        <position position="170"/>
    </location>
    <ligand>
        <name>phosphoenolpyruvate</name>
        <dbReference type="ChEBI" id="CHEBI:58702"/>
    </ligand>
</feature>
<feature type="binding site" evidence="1">
    <location>
        <position position="311"/>
    </location>
    <ligand>
        <name>3-phosphoshikimate</name>
        <dbReference type="ChEBI" id="CHEBI:145989"/>
    </ligand>
</feature>
<feature type="binding site" evidence="1">
    <location>
        <position position="338"/>
    </location>
    <ligand>
        <name>3-phosphoshikimate</name>
        <dbReference type="ChEBI" id="CHEBI:145989"/>
    </ligand>
</feature>
<feature type="binding site" evidence="1">
    <location>
        <position position="342"/>
    </location>
    <ligand>
        <name>phosphoenolpyruvate</name>
        <dbReference type="ChEBI" id="CHEBI:58702"/>
    </ligand>
</feature>
<feature type="binding site" evidence="1">
    <location>
        <position position="383"/>
    </location>
    <ligand>
        <name>phosphoenolpyruvate</name>
        <dbReference type="ChEBI" id="CHEBI:58702"/>
    </ligand>
</feature>
<feature type="binding site" evidence="1">
    <location>
        <position position="410"/>
    </location>
    <ligand>
        <name>phosphoenolpyruvate</name>
        <dbReference type="ChEBI" id="CHEBI:58702"/>
    </ligand>
</feature>
<gene>
    <name evidence="1" type="primary">aroA</name>
    <name type="ordered locus">TC_0645</name>
</gene>
<sequence length="441" mass="47727">MVPLNQAFLISPSAPYGEFSIPPSKSHSLRAILFASLSKGTSIINNSLSSPDTDTMLSACKKFGARITRVGETLHIQGNPPPYSQYSSHHFHMGNSGIALRFLTALSSLSPSPILITGAHTLKRRPIEPLLSSLEQLGSEIRQKKSSSIPFVIRGPISSGHVTISGQDSQYASALAITAAVAPHPLSFSIENLKERPWFDLTLDWLHSLNISFSREQDSLFFPGAQSIKSFSYSVPGDYSSAAFLAALGLLSSSSNPTVLYNLPSKDPQGDKQLFSLLKSLGADIVIEKDHIEIRPSSFSGGVIDMDPFIDALPILAVLCCFAKNPSHLYNALGARDKESNRIEAIAHELRKMGGSVHPTQDGLYIEPSRLHGAVVHSHNDHRIAMALAVAGVHASSGQTLLCNTQCVNKSFPHFVIAAQTLHANIRHHQADFSLRSSLCR</sequence>
<dbReference type="EC" id="2.5.1.19" evidence="1"/>
<dbReference type="EMBL" id="AE002160">
    <property type="protein sequence ID" value="AAF73581.1"/>
    <property type="molecule type" value="Genomic_DNA"/>
</dbReference>
<dbReference type="RefSeq" id="WP_010232860.1">
    <property type="nucleotide sequence ID" value="NZ_CP063055.1"/>
</dbReference>
<dbReference type="SMR" id="Q9PK28"/>
<dbReference type="GeneID" id="1246006"/>
<dbReference type="KEGG" id="cmu:TC_0645"/>
<dbReference type="eggNOG" id="COG0128">
    <property type="taxonomic scope" value="Bacteria"/>
</dbReference>
<dbReference type="HOGENOM" id="CLU_024321_0_0_0"/>
<dbReference type="OrthoDB" id="9809920at2"/>
<dbReference type="UniPathway" id="UPA00053">
    <property type="reaction ID" value="UER00089"/>
</dbReference>
<dbReference type="Proteomes" id="UP000000800">
    <property type="component" value="Chromosome"/>
</dbReference>
<dbReference type="GO" id="GO:0005737">
    <property type="term" value="C:cytoplasm"/>
    <property type="evidence" value="ECO:0007669"/>
    <property type="project" value="UniProtKB-SubCell"/>
</dbReference>
<dbReference type="GO" id="GO:0003866">
    <property type="term" value="F:3-phosphoshikimate 1-carboxyvinyltransferase activity"/>
    <property type="evidence" value="ECO:0007669"/>
    <property type="project" value="UniProtKB-UniRule"/>
</dbReference>
<dbReference type="GO" id="GO:0008652">
    <property type="term" value="P:amino acid biosynthetic process"/>
    <property type="evidence" value="ECO:0007669"/>
    <property type="project" value="UniProtKB-KW"/>
</dbReference>
<dbReference type="GO" id="GO:0009073">
    <property type="term" value="P:aromatic amino acid family biosynthetic process"/>
    <property type="evidence" value="ECO:0007669"/>
    <property type="project" value="UniProtKB-KW"/>
</dbReference>
<dbReference type="GO" id="GO:0009423">
    <property type="term" value="P:chorismate biosynthetic process"/>
    <property type="evidence" value="ECO:0007669"/>
    <property type="project" value="UniProtKB-UniRule"/>
</dbReference>
<dbReference type="CDD" id="cd01556">
    <property type="entry name" value="EPSP_synthase"/>
    <property type="match status" value="1"/>
</dbReference>
<dbReference type="Gene3D" id="3.65.10.10">
    <property type="entry name" value="Enolpyruvate transferase domain"/>
    <property type="match status" value="2"/>
</dbReference>
<dbReference type="HAMAP" id="MF_00210">
    <property type="entry name" value="EPSP_synth"/>
    <property type="match status" value="1"/>
</dbReference>
<dbReference type="InterPro" id="IPR001986">
    <property type="entry name" value="Enolpyruvate_Tfrase_dom"/>
</dbReference>
<dbReference type="InterPro" id="IPR036968">
    <property type="entry name" value="Enolpyruvate_Tfrase_sf"/>
</dbReference>
<dbReference type="InterPro" id="IPR006264">
    <property type="entry name" value="EPSP_synthase"/>
</dbReference>
<dbReference type="InterPro" id="IPR023193">
    <property type="entry name" value="EPSP_synthase_CS"/>
</dbReference>
<dbReference type="InterPro" id="IPR013792">
    <property type="entry name" value="RNA3'P_cycl/enolpyr_Trfase_a/b"/>
</dbReference>
<dbReference type="NCBIfam" id="TIGR01356">
    <property type="entry name" value="aroA"/>
    <property type="match status" value="1"/>
</dbReference>
<dbReference type="PANTHER" id="PTHR21090">
    <property type="entry name" value="AROM/DEHYDROQUINATE SYNTHASE"/>
    <property type="match status" value="1"/>
</dbReference>
<dbReference type="PANTHER" id="PTHR21090:SF5">
    <property type="entry name" value="PENTAFUNCTIONAL AROM POLYPEPTIDE"/>
    <property type="match status" value="1"/>
</dbReference>
<dbReference type="Pfam" id="PF00275">
    <property type="entry name" value="EPSP_synthase"/>
    <property type="match status" value="1"/>
</dbReference>
<dbReference type="PIRSF" id="PIRSF000505">
    <property type="entry name" value="EPSPS"/>
    <property type="match status" value="1"/>
</dbReference>
<dbReference type="SUPFAM" id="SSF55205">
    <property type="entry name" value="EPT/RTPC-like"/>
    <property type="match status" value="1"/>
</dbReference>
<dbReference type="PROSITE" id="PS00104">
    <property type="entry name" value="EPSP_SYNTHASE_1"/>
    <property type="match status" value="1"/>
</dbReference>
<dbReference type="PROSITE" id="PS00885">
    <property type="entry name" value="EPSP_SYNTHASE_2"/>
    <property type="match status" value="1"/>
</dbReference>
<reference key="1">
    <citation type="journal article" date="2000" name="Nucleic Acids Res.">
        <title>Genome sequences of Chlamydia trachomatis MoPn and Chlamydia pneumoniae AR39.</title>
        <authorList>
            <person name="Read T.D."/>
            <person name="Brunham R.C."/>
            <person name="Shen C."/>
            <person name="Gill S.R."/>
            <person name="Heidelberg J.F."/>
            <person name="White O."/>
            <person name="Hickey E.K."/>
            <person name="Peterson J.D."/>
            <person name="Utterback T.R."/>
            <person name="Berry K.J."/>
            <person name="Bass S."/>
            <person name="Linher K.D."/>
            <person name="Weidman J.F."/>
            <person name="Khouri H.M."/>
            <person name="Craven B."/>
            <person name="Bowman C."/>
            <person name="Dodson R.J."/>
            <person name="Gwinn M.L."/>
            <person name="Nelson W.C."/>
            <person name="DeBoy R.T."/>
            <person name="Kolonay J.F."/>
            <person name="McClarty G."/>
            <person name="Salzberg S.L."/>
            <person name="Eisen J.A."/>
            <person name="Fraser C.M."/>
        </authorList>
    </citation>
    <scope>NUCLEOTIDE SEQUENCE [LARGE SCALE GENOMIC DNA]</scope>
    <source>
        <strain>MoPn / Nigg</strain>
    </source>
</reference>
<keyword id="KW-0028">Amino-acid biosynthesis</keyword>
<keyword id="KW-0057">Aromatic amino acid biosynthesis</keyword>
<keyword id="KW-0963">Cytoplasm</keyword>
<keyword id="KW-0808">Transferase</keyword>
<comment type="function">
    <text evidence="1">Catalyzes the transfer of the enolpyruvyl moiety of phosphoenolpyruvate (PEP) to the 5-hydroxyl of shikimate-3-phosphate (S3P) to produce enolpyruvyl shikimate-3-phosphate and inorganic phosphate.</text>
</comment>
<comment type="catalytic activity">
    <reaction evidence="1">
        <text>3-phosphoshikimate + phosphoenolpyruvate = 5-O-(1-carboxyvinyl)-3-phosphoshikimate + phosphate</text>
        <dbReference type="Rhea" id="RHEA:21256"/>
        <dbReference type="ChEBI" id="CHEBI:43474"/>
        <dbReference type="ChEBI" id="CHEBI:57701"/>
        <dbReference type="ChEBI" id="CHEBI:58702"/>
        <dbReference type="ChEBI" id="CHEBI:145989"/>
        <dbReference type="EC" id="2.5.1.19"/>
    </reaction>
    <physiologicalReaction direction="left-to-right" evidence="1">
        <dbReference type="Rhea" id="RHEA:21257"/>
    </physiologicalReaction>
</comment>
<comment type="pathway">
    <text evidence="1">Metabolic intermediate biosynthesis; chorismate biosynthesis; chorismate from D-erythrose 4-phosphate and phosphoenolpyruvate: step 6/7.</text>
</comment>
<comment type="subunit">
    <text evidence="1">Monomer.</text>
</comment>
<comment type="subcellular location">
    <subcellularLocation>
        <location evidence="1">Cytoplasm</location>
    </subcellularLocation>
</comment>
<comment type="similarity">
    <text evidence="1 2">Belongs to the EPSP synthase family.</text>
</comment>
<evidence type="ECO:0000255" key="1">
    <source>
        <dbReference type="HAMAP-Rule" id="MF_00210"/>
    </source>
</evidence>
<evidence type="ECO:0000305" key="2"/>